<reference key="1">
    <citation type="journal article" date="2001" name="Lancet">
        <title>Whole genome sequencing of meticillin-resistant Staphylococcus aureus.</title>
        <authorList>
            <person name="Kuroda M."/>
            <person name="Ohta T."/>
            <person name="Uchiyama I."/>
            <person name="Baba T."/>
            <person name="Yuzawa H."/>
            <person name="Kobayashi I."/>
            <person name="Cui L."/>
            <person name="Oguchi A."/>
            <person name="Aoki K."/>
            <person name="Nagai Y."/>
            <person name="Lian J.-Q."/>
            <person name="Ito T."/>
            <person name="Kanamori M."/>
            <person name="Matsumaru H."/>
            <person name="Maruyama A."/>
            <person name="Murakami H."/>
            <person name="Hosoyama A."/>
            <person name="Mizutani-Ui Y."/>
            <person name="Takahashi N.K."/>
            <person name="Sawano T."/>
            <person name="Inoue R."/>
            <person name="Kaito C."/>
            <person name="Sekimizu K."/>
            <person name="Hirakawa H."/>
            <person name="Kuhara S."/>
            <person name="Goto S."/>
            <person name="Yabuzaki J."/>
            <person name="Kanehisa M."/>
            <person name="Yamashita A."/>
            <person name="Oshima K."/>
            <person name="Furuya K."/>
            <person name="Yoshino C."/>
            <person name="Shiba T."/>
            <person name="Hattori M."/>
            <person name="Ogasawara N."/>
            <person name="Hayashi H."/>
            <person name="Hiramatsu K."/>
        </authorList>
    </citation>
    <scope>NUCLEOTIDE SEQUENCE [LARGE SCALE GENOMIC DNA]</scope>
    <source>
        <strain>N315</strain>
    </source>
</reference>
<reference key="2">
    <citation type="submission" date="2007-10" db="UniProtKB">
        <title>Shotgun proteomic analysis of total and membrane protein extracts of S. aureus strain N315.</title>
        <authorList>
            <person name="Vaezzadeh A.R."/>
            <person name="Deshusses J."/>
            <person name="Lescuyer P."/>
            <person name="Hochstrasser D.F."/>
        </authorList>
    </citation>
    <scope>IDENTIFICATION BY MASS SPECTROMETRY [LARGE SCALE ANALYSIS]</scope>
    <source>
        <strain>N315</strain>
    </source>
</reference>
<gene>
    <name type="primary">map</name>
    <name type="ordered locus">SA1751</name>
</gene>
<protein>
    <recommendedName>
        <fullName>Protein map</fullName>
    </recommendedName>
</protein>
<sequence>MKFKSLITTTLALGVIASTGANFNTNEASAAAKPLDKSSSTLHHGHSNIQIPYTITVNGTSQNILSSLTFNKNQNISYKDIENKVKSVLYFNRGISDIDLRLSKQAEYTVHFKNGTKRVIDLKSGIYTADLINTSDIKAISVNVDTKKQPKDKAKANVQVPYTITVNGTSQNILSNLTFNKNQNISYKDLEGKVKSVLESNRGITDVDLRLSKQAKYTVNFKNGTKKVIDLKSGIYTANLINSSDIKSININVDTKKHIENKAKRNYQVPYSINLNGTSTNILSNLSFSNKPWTNYKNLTSQIKSVLKHDRGISEQDLKYAKKAYYTVYFKNGGKRILQLNSKNYTANLVHAKDVKRIEITVKTGTKAKADRYVPYTIAVNGTSTPILSKLKISNKQLISYKYLNDKVKSVLKSERGISDLDLKFAKQAKYTVYFKNGKKQVVNLKSDIFTPNLFSAKDIKKIDIDVKQYTKSKKK</sequence>
<feature type="signal peptide" evidence="1">
    <location>
        <begin position="1"/>
        <end position="30"/>
    </location>
</feature>
<feature type="chain" id="PRO_0000021640" description="Protein map">
    <location>
        <begin position="31"/>
        <end position="476"/>
    </location>
</feature>
<feature type="repeat" description="MAP 1">
    <location>
        <begin position="45"/>
        <end position="153"/>
    </location>
</feature>
<feature type="repeat" description="MAP 2">
    <location>
        <begin position="154"/>
        <end position="263"/>
    </location>
</feature>
<feature type="repeat" description="MAP 3">
    <location>
        <begin position="264"/>
        <end position="372"/>
    </location>
</feature>
<feature type="repeat" description="MAP 4">
    <location>
        <begin position="373"/>
        <end position="476"/>
    </location>
</feature>
<keyword id="KW-0677">Repeat</keyword>
<keyword id="KW-0732">Signal</keyword>
<accession>P69775</accession>
<evidence type="ECO:0000255" key="1"/>
<name>MAP_STAAN</name>
<proteinExistence type="evidence at protein level"/>
<organism>
    <name type="scientific">Staphylococcus aureus (strain N315)</name>
    <dbReference type="NCBI Taxonomy" id="158879"/>
    <lineage>
        <taxon>Bacteria</taxon>
        <taxon>Bacillati</taxon>
        <taxon>Bacillota</taxon>
        <taxon>Bacilli</taxon>
        <taxon>Bacillales</taxon>
        <taxon>Staphylococcaceae</taxon>
        <taxon>Staphylococcus</taxon>
    </lineage>
</organism>
<dbReference type="EMBL" id="BA000018">
    <property type="protein sequence ID" value="BAB43024.1"/>
    <property type="molecule type" value="Genomic_DNA"/>
</dbReference>
<dbReference type="RefSeq" id="WP_001557458.1">
    <property type="nucleotide sequence ID" value="NC_002745.2"/>
</dbReference>
<dbReference type="SMR" id="P69775"/>
<dbReference type="EnsemblBacteria" id="BAB43024">
    <property type="protein sequence ID" value="BAB43024"/>
    <property type="gene ID" value="BAB43024"/>
</dbReference>
<dbReference type="KEGG" id="sau:SA1751"/>
<dbReference type="HOGENOM" id="CLU_466842_0_0_9"/>
<dbReference type="Gene3D" id="3.10.20.120">
    <property type="match status" value="4"/>
</dbReference>
<dbReference type="InterPro" id="IPR005298">
    <property type="entry name" value="MAP_dom"/>
</dbReference>
<dbReference type="Pfam" id="PF03642">
    <property type="entry name" value="MAP"/>
    <property type="match status" value="4"/>
</dbReference>
<dbReference type="PROSITE" id="PS51223">
    <property type="entry name" value="MAP"/>
    <property type="match status" value="4"/>
</dbReference>